<organism>
    <name type="scientific">Salmonella dublin (strain CT_02021853)</name>
    <dbReference type="NCBI Taxonomy" id="439851"/>
    <lineage>
        <taxon>Bacteria</taxon>
        <taxon>Pseudomonadati</taxon>
        <taxon>Pseudomonadota</taxon>
        <taxon>Gammaproteobacteria</taxon>
        <taxon>Enterobacterales</taxon>
        <taxon>Enterobacteriaceae</taxon>
        <taxon>Salmonella</taxon>
    </lineage>
</organism>
<sequence>MDKLLERFLHYVSLDTQSKSGVRQVPSTEGQWKLLRLLKQQLEEMGLVNITLSEKGTLMATLPANVEGDIPAIGFISHVDTSPDFSGKNVNPQIVENYRGGDIALGIGDEVLSPVMFPVLHQLLGQTLVTTDGKTLLGADDKAGVAEIMTALAVLKGNPIPHGDIKVAFTPDEEVGKGAKHFDVEEFGAQWAYTVDGGGVGELEFENFNAASVNIKIVGNNVHPGTAKGVMVNALSLAARIHAEVPADEAPETTEGYEGFYHLASMKGTVDRAEMHYIIRDFDRKQFEARKRKMMEIAKKVGKGLHPDCYIELVIEDSYYNMREKVVEHPHILDIAQQAMRDCHITPEMKPIRGGTDGAQLSFMGLPCPNLFTGGYNYHGKHEFVTLEGMEKAVQVIVRIAELTAKRGQ</sequence>
<keyword id="KW-0031">Aminopeptidase</keyword>
<keyword id="KW-0963">Cytoplasm</keyword>
<keyword id="KW-0378">Hydrolase</keyword>
<keyword id="KW-0479">Metal-binding</keyword>
<keyword id="KW-0482">Metalloprotease</keyword>
<keyword id="KW-0645">Protease</keyword>
<keyword id="KW-0862">Zinc</keyword>
<reference key="1">
    <citation type="journal article" date="2011" name="J. Bacteriol.">
        <title>Comparative genomics of 28 Salmonella enterica isolates: evidence for CRISPR-mediated adaptive sublineage evolution.</title>
        <authorList>
            <person name="Fricke W.F."/>
            <person name="Mammel M.K."/>
            <person name="McDermott P.F."/>
            <person name="Tartera C."/>
            <person name="White D.G."/>
            <person name="Leclerc J.E."/>
            <person name="Ravel J."/>
            <person name="Cebula T.A."/>
        </authorList>
    </citation>
    <scope>NUCLEOTIDE SEQUENCE [LARGE SCALE GENOMIC DNA]</scope>
    <source>
        <strain>CT_02021853</strain>
    </source>
</reference>
<gene>
    <name evidence="1" type="primary">pepT</name>
    <name type="ordered locus">SeD_A2139</name>
</gene>
<comment type="function">
    <text evidence="1">Cleaves the N-terminal amino acid of tripeptides.</text>
</comment>
<comment type="catalytic activity">
    <reaction evidence="1">
        <text>Release of the N-terminal residue from a tripeptide.</text>
        <dbReference type="EC" id="3.4.11.4"/>
    </reaction>
</comment>
<comment type="cofactor">
    <cofactor evidence="1">
        <name>Zn(2+)</name>
        <dbReference type="ChEBI" id="CHEBI:29105"/>
    </cofactor>
    <text evidence="1">Binds 2 Zn(2+) ions per subunit.</text>
</comment>
<comment type="subcellular location">
    <subcellularLocation>
        <location evidence="1">Cytoplasm</location>
    </subcellularLocation>
</comment>
<comment type="similarity">
    <text evidence="1">Belongs to the peptidase M20B family.</text>
</comment>
<accession>B5FK77</accession>
<proteinExistence type="inferred from homology"/>
<protein>
    <recommendedName>
        <fullName evidence="1">Peptidase T</fullName>
        <ecNumber evidence="1">3.4.11.4</ecNumber>
    </recommendedName>
    <alternativeName>
        <fullName evidence="1">Aminotripeptidase</fullName>
        <shortName evidence="1">Tripeptidase</shortName>
    </alternativeName>
    <alternativeName>
        <fullName evidence="1">Tripeptide aminopeptidase</fullName>
    </alternativeName>
</protein>
<feature type="chain" id="PRO_1000129039" description="Peptidase T">
    <location>
        <begin position="1"/>
        <end position="409"/>
    </location>
</feature>
<feature type="active site" evidence="1">
    <location>
        <position position="80"/>
    </location>
</feature>
<feature type="active site" description="Proton acceptor" evidence="1">
    <location>
        <position position="173"/>
    </location>
</feature>
<feature type="binding site" evidence="1">
    <location>
        <position position="78"/>
    </location>
    <ligand>
        <name>Zn(2+)</name>
        <dbReference type="ChEBI" id="CHEBI:29105"/>
        <label>1</label>
    </ligand>
</feature>
<feature type="binding site" evidence="1">
    <location>
        <position position="140"/>
    </location>
    <ligand>
        <name>Zn(2+)</name>
        <dbReference type="ChEBI" id="CHEBI:29105"/>
        <label>1</label>
    </ligand>
</feature>
<feature type="binding site" evidence="1">
    <location>
        <position position="140"/>
    </location>
    <ligand>
        <name>Zn(2+)</name>
        <dbReference type="ChEBI" id="CHEBI:29105"/>
        <label>2</label>
    </ligand>
</feature>
<feature type="binding site" evidence="1">
    <location>
        <position position="174"/>
    </location>
    <ligand>
        <name>Zn(2+)</name>
        <dbReference type="ChEBI" id="CHEBI:29105"/>
        <label>2</label>
    </ligand>
</feature>
<feature type="binding site" evidence="1">
    <location>
        <position position="196"/>
    </location>
    <ligand>
        <name>Zn(2+)</name>
        <dbReference type="ChEBI" id="CHEBI:29105"/>
        <label>1</label>
    </ligand>
</feature>
<feature type="binding site" evidence="1">
    <location>
        <position position="379"/>
    </location>
    <ligand>
        <name>Zn(2+)</name>
        <dbReference type="ChEBI" id="CHEBI:29105"/>
        <label>2</label>
    </ligand>
</feature>
<dbReference type="EC" id="3.4.11.4" evidence="1"/>
<dbReference type="EMBL" id="CP001144">
    <property type="protein sequence ID" value="ACH77376.1"/>
    <property type="molecule type" value="Genomic_DNA"/>
</dbReference>
<dbReference type="RefSeq" id="WP_000359421.1">
    <property type="nucleotide sequence ID" value="NC_011205.1"/>
</dbReference>
<dbReference type="SMR" id="B5FK77"/>
<dbReference type="MEROPS" id="M20.003"/>
<dbReference type="KEGG" id="sed:SeD_A2139"/>
<dbReference type="HOGENOM" id="CLU_053676_0_0_6"/>
<dbReference type="Proteomes" id="UP000008322">
    <property type="component" value="Chromosome"/>
</dbReference>
<dbReference type="GO" id="GO:0005829">
    <property type="term" value="C:cytosol"/>
    <property type="evidence" value="ECO:0007669"/>
    <property type="project" value="TreeGrafter"/>
</dbReference>
<dbReference type="GO" id="GO:0008237">
    <property type="term" value="F:metallopeptidase activity"/>
    <property type="evidence" value="ECO:0007669"/>
    <property type="project" value="UniProtKB-KW"/>
</dbReference>
<dbReference type="GO" id="GO:0045148">
    <property type="term" value="F:tripeptide aminopeptidase activity"/>
    <property type="evidence" value="ECO:0007669"/>
    <property type="project" value="UniProtKB-UniRule"/>
</dbReference>
<dbReference type="GO" id="GO:0008270">
    <property type="term" value="F:zinc ion binding"/>
    <property type="evidence" value="ECO:0007669"/>
    <property type="project" value="UniProtKB-UniRule"/>
</dbReference>
<dbReference type="GO" id="GO:0043171">
    <property type="term" value="P:peptide catabolic process"/>
    <property type="evidence" value="ECO:0007669"/>
    <property type="project" value="UniProtKB-UniRule"/>
</dbReference>
<dbReference type="GO" id="GO:0006508">
    <property type="term" value="P:proteolysis"/>
    <property type="evidence" value="ECO:0007669"/>
    <property type="project" value="UniProtKB-UniRule"/>
</dbReference>
<dbReference type="CDD" id="cd03892">
    <property type="entry name" value="M20_peptT"/>
    <property type="match status" value="1"/>
</dbReference>
<dbReference type="FunFam" id="3.30.70.360:FF:000002">
    <property type="entry name" value="Peptidase T"/>
    <property type="match status" value="1"/>
</dbReference>
<dbReference type="Gene3D" id="3.30.70.360">
    <property type="match status" value="1"/>
</dbReference>
<dbReference type="Gene3D" id="3.40.630.10">
    <property type="entry name" value="Zn peptidases"/>
    <property type="match status" value="1"/>
</dbReference>
<dbReference type="HAMAP" id="MF_00550">
    <property type="entry name" value="Aminopeptidase_M20"/>
    <property type="match status" value="1"/>
</dbReference>
<dbReference type="InterPro" id="IPR001261">
    <property type="entry name" value="ArgE/DapE_CS"/>
</dbReference>
<dbReference type="InterPro" id="IPR036264">
    <property type="entry name" value="Bact_exopeptidase_dim_dom"/>
</dbReference>
<dbReference type="InterPro" id="IPR002933">
    <property type="entry name" value="Peptidase_M20"/>
</dbReference>
<dbReference type="InterPro" id="IPR011650">
    <property type="entry name" value="Peptidase_M20_dimer"/>
</dbReference>
<dbReference type="InterPro" id="IPR010161">
    <property type="entry name" value="Peptidase_M20B"/>
</dbReference>
<dbReference type="NCBIfam" id="TIGR01882">
    <property type="entry name" value="peptidase-T"/>
    <property type="match status" value="1"/>
</dbReference>
<dbReference type="NCBIfam" id="NF003976">
    <property type="entry name" value="PRK05469.1"/>
    <property type="match status" value="1"/>
</dbReference>
<dbReference type="NCBIfam" id="NF009920">
    <property type="entry name" value="PRK13381.1"/>
    <property type="match status" value="1"/>
</dbReference>
<dbReference type="PANTHER" id="PTHR42994">
    <property type="entry name" value="PEPTIDASE T"/>
    <property type="match status" value="1"/>
</dbReference>
<dbReference type="PANTHER" id="PTHR42994:SF1">
    <property type="entry name" value="PEPTIDASE T"/>
    <property type="match status" value="1"/>
</dbReference>
<dbReference type="Pfam" id="PF07687">
    <property type="entry name" value="M20_dimer"/>
    <property type="match status" value="1"/>
</dbReference>
<dbReference type="Pfam" id="PF01546">
    <property type="entry name" value="Peptidase_M20"/>
    <property type="match status" value="1"/>
</dbReference>
<dbReference type="PIRSF" id="PIRSF037215">
    <property type="entry name" value="Peptidase_M20B"/>
    <property type="match status" value="1"/>
</dbReference>
<dbReference type="SUPFAM" id="SSF55031">
    <property type="entry name" value="Bacterial exopeptidase dimerisation domain"/>
    <property type="match status" value="1"/>
</dbReference>
<dbReference type="SUPFAM" id="SSF53187">
    <property type="entry name" value="Zn-dependent exopeptidases"/>
    <property type="match status" value="1"/>
</dbReference>
<dbReference type="PROSITE" id="PS00758">
    <property type="entry name" value="ARGE_DAPE_CPG2_1"/>
    <property type="match status" value="1"/>
</dbReference>
<dbReference type="PROSITE" id="PS00759">
    <property type="entry name" value="ARGE_DAPE_CPG2_2"/>
    <property type="match status" value="1"/>
</dbReference>
<evidence type="ECO:0000255" key="1">
    <source>
        <dbReference type="HAMAP-Rule" id="MF_00550"/>
    </source>
</evidence>
<name>PEPT_SALDC</name>